<comment type="function">
    <text evidence="1">Catalyzes the initial step of the lipid cycle reactions in the biosynthesis of the cell wall peptidoglycan: transfers peptidoglycan precursor phospho-MurNAc-pentapeptide from UDP-MurNAc-pentapeptide onto the lipid carrier undecaprenyl phosphate, yielding undecaprenyl-pyrophosphoryl-MurNAc-pentapeptide, known as lipid I.</text>
</comment>
<comment type="catalytic activity">
    <reaction evidence="1">
        <text>UDP-N-acetyl-alpha-D-muramoyl-L-alanyl-gamma-D-glutamyl-L-lysyl-D-alanyl-D-alanine + di-trans,octa-cis-undecaprenyl phosphate = Mur2Ac(oyl-L-Ala-gamma-D-Glu-L-Lys-D-Ala-D-Ala)-di-trans,octa-cis-undecaprenyl diphosphate + UMP</text>
        <dbReference type="Rhea" id="RHEA:21920"/>
        <dbReference type="ChEBI" id="CHEBI:57865"/>
        <dbReference type="ChEBI" id="CHEBI:60032"/>
        <dbReference type="ChEBI" id="CHEBI:60392"/>
        <dbReference type="ChEBI" id="CHEBI:70758"/>
        <dbReference type="EC" id="2.7.8.13"/>
    </reaction>
</comment>
<comment type="cofactor">
    <cofactor evidence="1">
        <name>Mg(2+)</name>
        <dbReference type="ChEBI" id="CHEBI:18420"/>
    </cofactor>
</comment>
<comment type="pathway">
    <text evidence="1">Cell wall biogenesis; peptidoglycan biosynthesis.</text>
</comment>
<comment type="subcellular location">
    <subcellularLocation>
        <location evidence="1">Cell membrane</location>
        <topology evidence="1">Multi-pass membrane protein</topology>
    </subcellularLocation>
</comment>
<comment type="similarity">
    <text evidence="1">Belongs to the glycosyltransferase 4 family. MraY subfamily.</text>
</comment>
<protein>
    <recommendedName>
        <fullName evidence="1">Phospho-N-acetylmuramoyl-pentapeptide-transferase</fullName>
        <ecNumber evidence="1">2.7.8.13</ecNumber>
    </recommendedName>
    <alternativeName>
        <fullName evidence="1">UDP-MurNAc-pentapeptide phosphotransferase</fullName>
    </alternativeName>
</protein>
<dbReference type="EC" id="2.7.8.13" evidence="1"/>
<dbReference type="EMBL" id="CP000056">
    <property type="protein sequence ID" value="AAX72517.1"/>
    <property type="molecule type" value="Genomic_DNA"/>
</dbReference>
<dbReference type="RefSeq" id="WP_002988900.1">
    <property type="nucleotide sequence ID" value="NC_007296.2"/>
</dbReference>
<dbReference type="SMR" id="Q48RZ3"/>
<dbReference type="KEGG" id="spb:M28_Spy1407"/>
<dbReference type="HOGENOM" id="CLU_023982_0_1_9"/>
<dbReference type="UniPathway" id="UPA00219"/>
<dbReference type="GO" id="GO:0005886">
    <property type="term" value="C:plasma membrane"/>
    <property type="evidence" value="ECO:0007669"/>
    <property type="project" value="UniProtKB-SubCell"/>
</dbReference>
<dbReference type="GO" id="GO:0046872">
    <property type="term" value="F:metal ion binding"/>
    <property type="evidence" value="ECO:0007669"/>
    <property type="project" value="UniProtKB-KW"/>
</dbReference>
<dbReference type="GO" id="GO:0008963">
    <property type="term" value="F:phospho-N-acetylmuramoyl-pentapeptide-transferase activity"/>
    <property type="evidence" value="ECO:0007669"/>
    <property type="project" value="UniProtKB-UniRule"/>
</dbReference>
<dbReference type="GO" id="GO:0051301">
    <property type="term" value="P:cell division"/>
    <property type="evidence" value="ECO:0007669"/>
    <property type="project" value="UniProtKB-KW"/>
</dbReference>
<dbReference type="GO" id="GO:0071555">
    <property type="term" value="P:cell wall organization"/>
    <property type="evidence" value="ECO:0007669"/>
    <property type="project" value="UniProtKB-KW"/>
</dbReference>
<dbReference type="GO" id="GO:0009252">
    <property type="term" value="P:peptidoglycan biosynthetic process"/>
    <property type="evidence" value="ECO:0007669"/>
    <property type="project" value="UniProtKB-UniRule"/>
</dbReference>
<dbReference type="GO" id="GO:0008360">
    <property type="term" value="P:regulation of cell shape"/>
    <property type="evidence" value="ECO:0007669"/>
    <property type="project" value="UniProtKB-KW"/>
</dbReference>
<dbReference type="CDD" id="cd06852">
    <property type="entry name" value="GT_MraY"/>
    <property type="match status" value="1"/>
</dbReference>
<dbReference type="HAMAP" id="MF_00038">
    <property type="entry name" value="MraY"/>
    <property type="match status" value="1"/>
</dbReference>
<dbReference type="InterPro" id="IPR000715">
    <property type="entry name" value="Glycosyl_transferase_4"/>
</dbReference>
<dbReference type="InterPro" id="IPR003524">
    <property type="entry name" value="PNAcMuramoyl-5peptid_Trfase"/>
</dbReference>
<dbReference type="InterPro" id="IPR018480">
    <property type="entry name" value="PNAcMuramoyl-5peptid_Trfase_CS"/>
</dbReference>
<dbReference type="NCBIfam" id="TIGR00445">
    <property type="entry name" value="mraY"/>
    <property type="match status" value="1"/>
</dbReference>
<dbReference type="PANTHER" id="PTHR22926">
    <property type="entry name" value="PHOSPHO-N-ACETYLMURAMOYL-PENTAPEPTIDE-TRANSFERASE"/>
    <property type="match status" value="1"/>
</dbReference>
<dbReference type="PANTHER" id="PTHR22926:SF5">
    <property type="entry name" value="PHOSPHO-N-ACETYLMURAMOYL-PENTAPEPTIDE-TRANSFERASE HOMOLOG"/>
    <property type="match status" value="1"/>
</dbReference>
<dbReference type="Pfam" id="PF00953">
    <property type="entry name" value="Glycos_transf_4"/>
    <property type="match status" value="1"/>
</dbReference>
<dbReference type="Pfam" id="PF10555">
    <property type="entry name" value="MraY_sig1"/>
    <property type="match status" value="1"/>
</dbReference>
<dbReference type="PROSITE" id="PS01348">
    <property type="entry name" value="MRAY_2"/>
    <property type="match status" value="1"/>
</dbReference>
<organism>
    <name type="scientific">Streptococcus pyogenes serotype M28 (strain MGAS6180)</name>
    <dbReference type="NCBI Taxonomy" id="319701"/>
    <lineage>
        <taxon>Bacteria</taxon>
        <taxon>Bacillati</taxon>
        <taxon>Bacillota</taxon>
        <taxon>Bacilli</taxon>
        <taxon>Lactobacillales</taxon>
        <taxon>Streptococcaceae</taxon>
        <taxon>Streptococcus</taxon>
    </lineage>
</organism>
<evidence type="ECO:0000255" key="1">
    <source>
        <dbReference type="HAMAP-Rule" id="MF_00038"/>
    </source>
</evidence>
<sequence>MFLTLIAAIISFMVSAFTMPYFIKFYQLKKIGGQQMHEDVKQHLAKAGTPTMGGTVFLLVATAVSLLVSLFSIKNTQSLALISGILSIVVIYGIIGFLDDFLKIFKQINEGLTAKQKLALQLVGGLMFYFLHVSPSGISSINVFGYQLPLGIFYLFFVLFWVVGFSNAVNLTDGIDGLASISVVISLVTYGVIAYVQSQFDVLLLIGAMIGALLGFFCFNHKPAKVFMGDVGSLALGAMLAAISIALRQEWTLLIIGIVYVLETSSVMLQVSYFKYTKKKYGEGRRIFRMTPFHHHLELGGLSGKGKKWSEWQVDAFLWGVGSLASLLVLAILYVF</sequence>
<gene>
    <name evidence="1" type="primary">mraY</name>
    <name type="ordered locus">M28_Spy1407</name>
</gene>
<keyword id="KW-0131">Cell cycle</keyword>
<keyword id="KW-0132">Cell division</keyword>
<keyword id="KW-1003">Cell membrane</keyword>
<keyword id="KW-0133">Cell shape</keyword>
<keyword id="KW-0961">Cell wall biogenesis/degradation</keyword>
<keyword id="KW-0460">Magnesium</keyword>
<keyword id="KW-0472">Membrane</keyword>
<keyword id="KW-0479">Metal-binding</keyword>
<keyword id="KW-0573">Peptidoglycan synthesis</keyword>
<keyword id="KW-0808">Transferase</keyword>
<keyword id="KW-0812">Transmembrane</keyword>
<keyword id="KW-1133">Transmembrane helix</keyword>
<reference key="1">
    <citation type="journal article" date="2005" name="J. Infect. Dis.">
        <title>Genome sequence of a serotype M28 strain of group A Streptococcus: potential new insights into puerperal sepsis and bacterial disease specificity.</title>
        <authorList>
            <person name="Green N.M."/>
            <person name="Zhang S."/>
            <person name="Porcella S.F."/>
            <person name="Nagiec M.J."/>
            <person name="Barbian K.D."/>
            <person name="Beres S.B."/>
            <person name="Lefebvre R.B."/>
            <person name="Musser J.M."/>
        </authorList>
    </citation>
    <scope>NUCLEOTIDE SEQUENCE [LARGE SCALE GENOMIC DNA]</scope>
    <source>
        <strain>MGAS6180</strain>
    </source>
</reference>
<accession>Q48RZ3</accession>
<feature type="chain" id="PRO_0000235489" description="Phospho-N-acetylmuramoyl-pentapeptide-transferase">
    <location>
        <begin position="1"/>
        <end position="336"/>
    </location>
</feature>
<feature type="transmembrane region" description="Helical" evidence="1">
    <location>
        <begin position="3"/>
        <end position="23"/>
    </location>
</feature>
<feature type="transmembrane region" description="Helical" evidence="1">
    <location>
        <begin position="53"/>
        <end position="73"/>
    </location>
</feature>
<feature type="transmembrane region" description="Helical" evidence="1">
    <location>
        <begin position="78"/>
        <end position="98"/>
    </location>
</feature>
<feature type="transmembrane region" description="Helical" evidence="1">
    <location>
        <begin position="118"/>
        <end position="138"/>
    </location>
</feature>
<feature type="transmembrane region" description="Helical" evidence="1">
    <location>
        <begin position="143"/>
        <end position="163"/>
    </location>
</feature>
<feature type="transmembrane region" description="Helical" evidence="1">
    <location>
        <begin position="174"/>
        <end position="194"/>
    </location>
</feature>
<feature type="transmembrane region" description="Helical" evidence="1">
    <location>
        <begin position="200"/>
        <end position="220"/>
    </location>
</feature>
<feature type="transmembrane region" description="Helical" evidence="1">
    <location>
        <begin position="226"/>
        <end position="246"/>
    </location>
</feature>
<feature type="transmembrane region" description="Helical" evidence="1">
    <location>
        <begin position="251"/>
        <end position="271"/>
    </location>
</feature>
<feature type="transmembrane region" description="Helical" evidence="1">
    <location>
        <begin position="316"/>
        <end position="336"/>
    </location>
</feature>
<name>MRAY_STRPM</name>
<proteinExistence type="inferred from homology"/>